<name>SERC_XANOM</name>
<reference key="1">
    <citation type="journal article" date="2005" name="Jpn. Agric. Res. Q.">
        <title>Genome sequence of Xanthomonas oryzae pv. oryzae suggests contribution of large numbers of effector genes and insertion sequences to its race diversity.</title>
        <authorList>
            <person name="Ochiai H."/>
            <person name="Inoue Y."/>
            <person name="Takeya M."/>
            <person name="Sasaki A."/>
            <person name="Kaku H."/>
        </authorList>
    </citation>
    <scope>NUCLEOTIDE SEQUENCE [LARGE SCALE GENOMIC DNA]</scope>
    <source>
        <strain>MAFF 311018</strain>
    </source>
</reference>
<evidence type="ECO:0000255" key="1">
    <source>
        <dbReference type="HAMAP-Rule" id="MF_00160"/>
    </source>
</evidence>
<accession>Q2P354</accession>
<feature type="chain" id="PRO_1000076912" description="Phosphoserine aminotransferase">
    <location>
        <begin position="1"/>
        <end position="361"/>
    </location>
</feature>
<feature type="binding site" evidence="1">
    <location>
        <position position="42"/>
    </location>
    <ligand>
        <name>L-glutamate</name>
        <dbReference type="ChEBI" id="CHEBI:29985"/>
    </ligand>
</feature>
<feature type="binding site" evidence="1">
    <location>
        <begin position="76"/>
        <end position="77"/>
    </location>
    <ligand>
        <name>pyridoxal 5'-phosphate</name>
        <dbReference type="ChEBI" id="CHEBI:597326"/>
    </ligand>
</feature>
<feature type="binding site" evidence="1">
    <location>
        <position position="102"/>
    </location>
    <ligand>
        <name>pyridoxal 5'-phosphate</name>
        <dbReference type="ChEBI" id="CHEBI:597326"/>
    </ligand>
</feature>
<feature type="binding site" evidence="1">
    <location>
        <position position="152"/>
    </location>
    <ligand>
        <name>pyridoxal 5'-phosphate</name>
        <dbReference type="ChEBI" id="CHEBI:597326"/>
    </ligand>
</feature>
<feature type="binding site" evidence="1">
    <location>
        <position position="172"/>
    </location>
    <ligand>
        <name>pyridoxal 5'-phosphate</name>
        <dbReference type="ChEBI" id="CHEBI:597326"/>
    </ligand>
</feature>
<feature type="binding site" evidence="1">
    <location>
        <position position="195"/>
    </location>
    <ligand>
        <name>pyridoxal 5'-phosphate</name>
        <dbReference type="ChEBI" id="CHEBI:597326"/>
    </ligand>
</feature>
<feature type="binding site" evidence="1">
    <location>
        <begin position="237"/>
        <end position="238"/>
    </location>
    <ligand>
        <name>pyridoxal 5'-phosphate</name>
        <dbReference type="ChEBI" id="CHEBI:597326"/>
    </ligand>
</feature>
<feature type="modified residue" description="N6-(pyridoxal phosphate)lysine" evidence="1">
    <location>
        <position position="196"/>
    </location>
</feature>
<proteinExistence type="inferred from homology"/>
<organism>
    <name type="scientific">Xanthomonas oryzae pv. oryzae (strain MAFF 311018)</name>
    <dbReference type="NCBI Taxonomy" id="342109"/>
    <lineage>
        <taxon>Bacteria</taxon>
        <taxon>Pseudomonadati</taxon>
        <taxon>Pseudomonadota</taxon>
        <taxon>Gammaproteobacteria</taxon>
        <taxon>Lysobacterales</taxon>
        <taxon>Lysobacteraceae</taxon>
        <taxon>Xanthomonas</taxon>
    </lineage>
</organism>
<sequence length="361" mass="38732">MTRAFNFSAGPATLPESVLRQAQAEMVEWNGVGASIVEISHRSADFMAVAAAAEADLRSLLSIPDDYAVMFTAGGATTIQALLPLNFAAPGQAADYVITGHWGKTAIKQASPYVDARIAADAETGGFLDIPPAASWTLSPHSAYVHITANETIHGVEFRDTPEVGTLPLFADFSSSIASEPLDISRYGLIYAGAQKNLGPVGISVVIVRRDLLERAGQPRADIFNYASHVARDSMLNTPPTWNWYLLGLTVKWMLEQGGVQEFARRNAEKAALVYGAIDGAGGFYRNLITPAVRSRMNIPFFLPDEQLDALFVSESKAAGLLALKGHKAVGGIRASLYNAMPLAGAQALANFMHDFQQRHG</sequence>
<keyword id="KW-0028">Amino-acid biosynthesis</keyword>
<keyword id="KW-0032">Aminotransferase</keyword>
<keyword id="KW-0963">Cytoplasm</keyword>
<keyword id="KW-0663">Pyridoxal phosphate</keyword>
<keyword id="KW-0664">Pyridoxine biosynthesis</keyword>
<keyword id="KW-0718">Serine biosynthesis</keyword>
<keyword id="KW-0808">Transferase</keyword>
<protein>
    <recommendedName>
        <fullName evidence="1">Phosphoserine aminotransferase</fullName>
        <ecNumber evidence="1">2.6.1.52</ecNumber>
    </recommendedName>
    <alternativeName>
        <fullName evidence="1">Phosphohydroxythreonine aminotransferase</fullName>
        <shortName evidence="1">PSAT</shortName>
    </alternativeName>
</protein>
<comment type="function">
    <text evidence="1">Catalyzes the reversible conversion of 3-phosphohydroxypyruvate to phosphoserine and of 3-hydroxy-2-oxo-4-phosphonooxybutanoate to phosphohydroxythreonine.</text>
</comment>
<comment type="catalytic activity">
    <reaction evidence="1">
        <text>O-phospho-L-serine + 2-oxoglutarate = 3-phosphooxypyruvate + L-glutamate</text>
        <dbReference type="Rhea" id="RHEA:14329"/>
        <dbReference type="ChEBI" id="CHEBI:16810"/>
        <dbReference type="ChEBI" id="CHEBI:18110"/>
        <dbReference type="ChEBI" id="CHEBI:29985"/>
        <dbReference type="ChEBI" id="CHEBI:57524"/>
        <dbReference type="EC" id="2.6.1.52"/>
    </reaction>
</comment>
<comment type="catalytic activity">
    <reaction evidence="1">
        <text>4-(phosphooxy)-L-threonine + 2-oxoglutarate = (R)-3-hydroxy-2-oxo-4-phosphooxybutanoate + L-glutamate</text>
        <dbReference type="Rhea" id="RHEA:16573"/>
        <dbReference type="ChEBI" id="CHEBI:16810"/>
        <dbReference type="ChEBI" id="CHEBI:29985"/>
        <dbReference type="ChEBI" id="CHEBI:58452"/>
        <dbReference type="ChEBI" id="CHEBI:58538"/>
        <dbReference type="EC" id="2.6.1.52"/>
    </reaction>
</comment>
<comment type="cofactor">
    <cofactor evidence="1">
        <name>pyridoxal 5'-phosphate</name>
        <dbReference type="ChEBI" id="CHEBI:597326"/>
    </cofactor>
    <text evidence="1">Binds 1 pyridoxal phosphate per subunit.</text>
</comment>
<comment type="pathway">
    <text evidence="1">Amino-acid biosynthesis; L-serine biosynthesis; L-serine from 3-phospho-D-glycerate: step 2/3.</text>
</comment>
<comment type="pathway">
    <text evidence="1">Cofactor biosynthesis; pyridoxine 5'-phosphate biosynthesis; pyridoxine 5'-phosphate from D-erythrose 4-phosphate: step 3/5.</text>
</comment>
<comment type="subunit">
    <text evidence="1">Homodimer.</text>
</comment>
<comment type="subcellular location">
    <subcellularLocation>
        <location evidence="1">Cytoplasm</location>
    </subcellularLocation>
</comment>
<comment type="similarity">
    <text evidence="1">Belongs to the class-V pyridoxal-phosphate-dependent aminotransferase family. SerC subfamily.</text>
</comment>
<dbReference type="EC" id="2.6.1.52" evidence="1"/>
<dbReference type="EMBL" id="AP008229">
    <property type="protein sequence ID" value="BAE69023.1"/>
    <property type="molecule type" value="Genomic_DNA"/>
</dbReference>
<dbReference type="RefSeq" id="WP_011259052.1">
    <property type="nucleotide sequence ID" value="NC_007705.1"/>
</dbReference>
<dbReference type="SMR" id="Q2P354"/>
<dbReference type="KEGG" id="xom:XOO2268"/>
<dbReference type="HOGENOM" id="CLU_034866_0_2_6"/>
<dbReference type="UniPathway" id="UPA00135">
    <property type="reaction ID" value="UER00197"/>
</dbReference>
<dbReference type="UniPathway" id="UPA00244">
    <property type="reaction ID" value="UER00311"/>
</dbReference>
<dbReference type="GO" id="GO:0005737">
    <property type="term" value="C:cytoplasm"/>
    <property type="evidence" value="ECO:0007669"/>
    <property type="project" value="UniProtKB-SubCell"/>
</dbReference>
<dbReference type="GO" id="GO:0004648">
    <property type="term" value="F:O-phospho-L-serine:2-oxoglutarate aminotransferase activity"/>
    <property type="evidence" value="ECO:0007669"/>
    <property type="project" value="UniProtKB-UniRule"/>
</dbReference>
<dbReference type="GO" id="GO:0030170">
    <property type="term" value="F:pyridoxal phosphate binding"/>
    <property type="evidence" value="ECO:0007669"/>
    <property type="project" value="UniProtKB-UniRule"/>
</dbReference>
<dbReference type="GO" id="GO:0006564">
    <property type="term" value="P:L-serine biosynthetic process"/>
    <property type="evidence" value="ECO:0007669"/>
    <property type="project" value="UniProtKB-UniRule"/>
</dbReference>
<dbReference type="GO" id="GO:0008615">
    <property type="term" value="P:pyridoxine biosynthetic process"/>
    <property type="evidence" value="ECO:0007669"/>
    <property type="project" value="UniProtKB-UniRule"/>
</dbReference>
<dbReference type="FunFam" id="3.40.640.10:FF:000010">
    <property type="entry name" value="Phosphoserine aminotransferase"/>
    <property type="match status" value="1"/>
</dbReference>
<dbReference type="FunFam" id="3.90.1150.10:FF:000006">
    <property type="entry name" value="Phosphoserine aminotransferase"/>
    <property type="match status" value="1"/>
</dbReference>
<dbReference type="Gene3D" id="3.90.1150.10">
    <property type="entry name" value="Aspartate Aminotransferase, domain 1"/>
    <property type="match status" value="1"/>
</dbReference>
<dbReference type="Gene3D" id="3.40.640.10">
    <property type="entry name" value="Type I PLP-dependent aspartate aminotransferase-like (Major domain)"/>
    <property type="match status" value="1"/>
</dbReference>
<dbReference type="HAMAP" id="MF_00160">
    <property type="entry name" value="SerC_aminotrans_5"/>
    <property type="match status" value="1"/>
</dbReference>
<dbReference type="InterPro" id="IPR000192">
    <property type="entry name" value="Aminotrans_V_dom"/>
</dbReference>
<dbReference type="InterPro" id="IPR020578">
    <property type="entry name" value="Aminotrans_V_PyrdxlP_BS"/>
</dbReference>
<dbReference type="InterPro" id="IPR022278">
    <property type="entry name" value="Pser_aminoTfrase"/>
</dbReference>
<dbReference type="InterPro" id="IPR015424">
    <property type="entry name" value="PyrdxlP-dep_Trfase"/>
</dbReference>
<dbReference type="InterPro" id="IPR015421">
    <property type="entry name" value="PyrdxlP-dep_Trfase_major"/>
</dbReference>
<dbReference type="InterPro" id="IPR015422">
    <property type="entry name" value="PyrdxlP-dep_Trfase_small"/>
</dbReference>
<dbReference type="NCBIfam" id="NF003764">
    <property type="entry name" value="PRK05355.1"/>
    <property type="match status" value="1"/>
</dbReference>
<dbReference type="NCBIfam" id="TIGR01364">
    <property type="entry name" value="serC_1"/>
    <property type="match status" value="1"/>
</dbReference>
<dbReference type="PANTHER" id="PTHR43247">
    <property type="entry name" value="PHOSPHOSERINE AMINOTRANSFERASE"/>
    <property type="match status" value="1"/>
</dbReference>
<dbReference type="PANTHER" id="PTHR43247:SF1">
    <property type="entry name" value="PHOSPHOSERINE AMINOTRANSFERASE"/>
    <property type="match status" value="1"/>
</dbReference>
<dbReference type="Pfam" id="PF00266">
    <property type="entry name" value="Aminotran_5"/>
    <property type="match status" value="1"/>
</dbReference>
<dbReference type="PIRSF" id="PIRSF000525">
    <property type="entry name" value="SerC"/>
    <property type="match status" value="1"/>
</dbReference>
<dbReference type="SUPFAM" id="SSF53383">
    <property type="entry name" value="PLP-dependent transferases"/>
    <property type="match status" value="1"/>
</dbReference>
<dbReference type="PROSITE" id="PS00595">
    <property type="entry name" value="AA_TRANSFER_CLASS_5"/>
    <property type="match status" value="1"/>
</dbReference>
<gene>
    <name evidence="1" type="primary">serC</name>
    <name type="ordered locus">XOO2268</name>
</gene>